<protein>
    <recommendedName>
        <fullName>Uncharacterized protein MJ0505</fullName>
    </recommendedName>
</protein>
<proteinExistence type="predicted"/>
<feature type="chain" id="PRO_0000106904" description="Uncharacterized protein MJ0505">
    <location>
        <begin position="1"/>
        <end position="250"/>
    </location>
</feature>
<feature type="transmembrane region" description="Helical" evidence="1">
    <location>
        <begin position="4"/>
        <end position="24"/>
    </location>
</feature>
<sequence length="250" mass="29848">MNKFKYLLFLVVFAVFFLTFAFFDNSSKSHQDDDEQKPIILIHDVSPVYFKELKEIVKIIDKYHYQNRSYLFLIVNHANKYNLKNYPEFVDYLHKLEKEGYHIEFHAYNHIDDEFNCNKTVAEEKLNKSFKILEECGFNPKKIKYFIPPRYKLSEDAEKLFLGRNITIILENKMITEKDGKIVEISITNREYTWYLPKPLVKVAEKIATTDYKLSIKENRKFFLSIHPKAVNYGSGLEFLDYFLNETSKN</sequence>
<accession>Q57928</accession>
<name>Y505_METJA</name>
<keyword id="KW-0472">Membrane</keyword>
<keyword id="KW-1185">Reference proteome</keyword>
<keyword id="KW-0812">Transmembrane</keyword>
<keyword id="KW-1133">Transmembrane helix</keyword>
<gene>
    <name type="ordered locus">MJ0505</name>
</gene>
<comment type="subcellular location">
    <subcellularLocation>
        <location evidence="2">Membrane</location>
        <topology evidence="2">Single-pass membrane protein</topology>
    </subcellularLocation>
</comment>
<reference key="1">
    <citation type="journal article" date="1996" name="Science">
        <title>Complete genome sequence of the methanogenic archaeon, Methanococcus jannaschii.</title>
        <authorList>
            <person name="Bult C.J."/>
            <person name="White O."/>
            <person name="Olsen G.J."/>
            <person name="Zhou L."/>
            <person name="Fleischmann R.D."/>
            <person name="Sutton G.G."/>
            <person name="Blake J.A."/>
            <person name="FitzGerald L.M."/>
            <person name="Clayton R.A."/>
            <person name="Gocayne J.D."/>
            <person name="Kerlavage A.R."/>
            <person name="Dougherty B.A."/>
            <person name="Tomb J.-F."/>
            <person name="Adams M.D."/>
            <person name="Reich C.I."/>
            <person name="Overbeek R."/>
            <person name="Kirkness E.F."/>
            <person name="Weinstock K.G."/>
            <person name="Merrick J.M."/>
            <person name="Glodek A."/>
            <person name="Scott J.L."/>
            <person name="Geoghagen N.S.M."/>
            <person name="Weidman J.F."/>
            <person name="Fuhrmann J.L."/>
            <person name="Nguyen D."/>
            <person name="Utterback T.R."/>
            <person name="Kelley J.M."/>
            <person name="Peterson J.D."/>
            <person name="Sadow P.W."/>
            <person name="Hanna M.C."/>
            <person name="Cotton M.D."/>
            <person name="Roberts K.M."/>
            <person name="Hurst M.A."/>
            <person name="Kaine B.P."/>
            <person name="Borodovsky M."/>
            <person name="Klenk H.-P."/>
            <person name="Fraser C.M."/>
            <person name="Smith H.O."/>
            <person name="Woese C.R."/>
            <person name="Venter J.C."/>
        </authorList>
    </citation>
    <scope>NUCLEOTIDE SEQUENCE [LARGE SCALE GENOMIC DNA]</scope>
    <source>
        <strain>ATCC 43067 / DSM 2661 / JAL-1 / JCM 10045 / NBRC 100440</strain>
    </source>
</reference>
<organism>
    <name type="scientific">Methanocaldococcus jannaschii (strain ATCC 43067 / DSM 2661 / JAL-1 / JCM 10045 / NBRC 100440)</name>
    <name type="common">Methanococcus jannaschii</name>
    <dbReference type="NCBI Taxonomy" id="243232"/>
    <lineage>
        <taxon>Archaea</taxon>
        <taxon>Methanobacteriati</taxon>
        <taxon>Methanobacteriota</taxon>
        <taxon>Methanomada group</taxon>
        <taxon>Methanococci</taxon>
        <taxon>Methanococcales</taxon>
        <taxon>Methanocaldococcaceae</taxon>
        <taxon>Methanocaldococcus</taxon>
    </lineage>
</organism>
<evidence type="ECO:0000255" key="1"/>
<evidence type="ECO:0000305" key="2"/>
<dbReference type="EMBL" id="L77117">
    <property type="protein sequence ID" value="AAB98501.1"/>
    <property type="molecule type" value="Genomic_DNA"/>
</dbReference>
<dbReference type="PIR" id="A64363">
    <property type="entry name" value="A64363"/>
</dbReference>
<dbReference type="RefSeq" id="WP_064496918.1">
    <property type="nucleotide sequence ID" value="NC_000909.1"/>
</dbReference>
<dbReference type="SMR" id="Q57928"/>
<dbReference type="FunCoup" id="Q57928">
    <property type="interactions" value="2"/>
</dbReference>
<dbReference type="STRING" id="243232.MJ_0505"/>
<dbReference type="PaxDb" id="243232-MJ_0505"/>
<dbReference type="EnsemblBacteria" id="AAB98501">
    <property type="protein sequence ID" value="AAB98501"/>
    <property type="gene ID" value="MJ_0505"/>
</dbReference>
<dbReference type="GeneID" id="1451367"/>
<dbReference type="KEGG" id="mja:MJ_0505"/>
<dbReference type="eggNOG" id="arCOG05033">
    <property type="taxonomic scope" value="Archaea"/>
</dbReference>
<dbReference type="HOGENOM" id="CLU_078976_0_0_2"/>
<dbReference type="InParanoid" id="Q57928"/>
<dbReference type="OrthoDB" id="65404at2157"/>
<dbReference type="PhylomeDB" id="Q57928"/>
<dbReference type="Proteomes" id="UP000000805">
    <property type="component" value="Chromosome"/>
</dbReference>
<dbReference type="GO" id="GO:0016020">
    <property type="term" value="C:membrane"/>
    <property type="evidence" value="ECO:0007669"/>
    <property type="project" value="UniProtKB-SubCell"/>
</dbReference>
<dbReference type="GO" id="GO:0005975">
    <property type="term" value="P:carbohydrate metabolic process"/>
    <property type="evidence" value="ECO:0007669"/>
    <property type="project" value="InterPro"/>
</dbReference>
<dbReference type="Gene3D" id="3.20.20.370">
    <property type="entry name" value="Glycoside hydrolase/deacetylase"/>
    <property type="match status" value="1"/>
</dbReference>
<dbReference type="InterPro" id="IPR018763">
    <property type="entry name" value="DUF2334"/>
</dbReference>
<dbReference type="InterPro" id="IPR011330">
    <property type="entry name" value="Glyco_hydro/deAcase_b/a-brl"/>
</dbReference>
<dbReference type="Pfam" id="PF10096">
    <property type="entry name" value="DUF2334"/>
    <property type="match status" value="1"/>
</dbReference>
<dbReference type="SUPFAM" id="SSF88713">
    <property type="entry name" value="Glycoside hydrolase/deacetylase"/>
    <property type="match status" value="1"/>
</dbReference>